<name>RL392_ARATH</name>
<protein>
    <recommendedName>
        <fullName evidence="2">Large ribosomal subunit protein eL39y</fullName>
    </recommendedName>
    <alternativeName>
        <fullName>60S ribosomal protein L39-2</fullName>
    </alternativeName>
</protein>
<feature type="chain" id="PRO_0000245497" description="Large ribosomal subunit protein eL39y">
    <location>
        <begin position="1"/>
        <end position="51"/>
    </location>
</feature>
<feature type="region of interest" description="Disordered" evidence="1">
    <location>
        <begin position="1"/>
        <end position="21"/>
    </location>
</feature>
<feature type="compositionally biased region" description="Basic residues" evidence="1">
    <location>
        <begin position="7"/>
        <end position="19"/>
    </location>
</feature>
<organism>
    <name type="scientific">Arabidopsis thaliana</name>
    <name type="common">Mouse-ear cress</name>
    <dbReference type="NCBI Taxonomy" id="3702"/>
    <lineage>
        <taxon>Eukaryota</taxon>
        <taxon>Viridiplantae</taxon>
        <taxon>Streptophyta</taxon>
        <taxon>Embryophyta</taxon>
        <taxon>Tracheophyta</taxon>
        <taxon>Spermatophyta</taxon>
        <taxon>Magnoliopsida</taxon>
        <taxon>eudicotyledons</taxon>
        <taxon>Gunneridae</taxon>
        <taxon>Pentapetalae</taxon>
        <taxon>rosids</taxon>
        <taxon>malvids</taxon>
        <taxon>Brassicales</taxon>
        <taxon>Brassicaceae</taxon>
        <taxon>Camelineae</taxon>
        <taxon>Arabidopsis</taxon>
    </lineage>
</organism>
<evidence type="ECO:0000256" key="1">
    <source>
        <dbReference type="SAM" id="MobiDB-lite"/>
    </source>
</evidence>
<evidence type="ECO:0000303" key="2">
    <source>
    </source>
</evidence>
<evidence type="ECO:0000305" key="3"/>
<reference key="1">
    <citation type="journal article" date="2000" name="Nature">
        <title>Sequence and analysis of chromosome 3 of the plant Arabidopsis thaliana.</title>
        <authorList>
            <person name="Salanoubat M."/>
            <person name="Lemcke K."/>
            <person name="Rieger M."/>
            <person name="Ansorge W."/>
            <person name="Unseld M."/>
            <person name="Fartmann B."/>
            <person name="Valle G."/>
            <person name="Bloecker H."/>
            <person name="Perez-Alonso M."/>
            <person name="Obermaier B."/>
            <person name="Delseny M."/>
            <person name="Boutry M."/>
            <person name="Grivell L.A."/>
            <person name="Mache R."/>
            <person name="Puigdomenech P."/>
            <person name="De Simone V."/>
            <person name="Choisne N."/>
            <person name="Artiguenave F."/>
            <person name="Robert C."/>
            <person name="Brottier P."/>
            <person name="Wincker P."/>
            <person name="Cattolico L."/>
            <person name="Weissenbach J."/>
            <person name="Saurin W."/>
            <person name="Quetier F."/>
            <person name="Schaefer M."/>
            <person name="Mueller-Auer S."/>
            <person name="Gabel C."/>
            <person name="Fuchs M."/>
            <person name="Benes V."/>
            <person name="Wurmbach E."/>
            <person name="Drzonek H."/>
            <person name="Erfle H."/>
            <person name="Jordan N."/>
            <person name="Bangert S."/>
            <person name="Wiedelmann R."/>
            <person name="Kranz H."/>
            <person name="Voss H."/>
            <person name="Holland R."/>
            <person name="Brandt P."/>
            <person name="Nyakatura G."/>
            <person name="Vezzi A."/>
            <person name="D'Angelo M."/>
            <person name="Pallavicini A."/>
            <person name="Toppo S."/>
            <person name="Simionati B."/>
            <person name="Conrad A."/>
            <person name="Hornischer K."/>
            <person name="Kauer G."/>
            <person name="Loehnert T.-H."/>
            <person name="Nordsiek G."/>
            <person name="Reichelt J."/>
            <person name="Scharfe M."/>
            <person name="Schoen O."/>
            <person name="Bargues M."/>
            <person name="Terol J."/>
            <person name="Climent J."/>
            <person name="Navarro P."/>
            <person name="Collado C."/>
            <person name="Perez-Perez A."/>
            <person name="Ottenwaelder B."/>
            <person name="Duchemin D."/>
            <person name="Cooke R."/>
            <person name="Laudie M."/>
            <person name="Berger-Llauro C."/>
            <person name="Purnelle B."/>
            <person name="Masuy D."/>
            <person name="de Haan M."/>
            <person name="Maarse A.C."/>
            <person name="Alcaraz J.-P."/>
            <person name="Cottet A."/>
            <person name="Casacuberta E."/>
            <person name="Monfort A."/>
            <person name="Argiriou A."/>
            <person name="Flores M."/>
            <person name="Liguori R."/>
            <person name="Vitale D."/>
            <person name="Mannhaupt G."/>
            <person name="Haase D."/>
            <person name="Schoof H."/>
            <person name="Rudd S."/>
            <person name="Zaccaria P."/>
            <person name="Mewes H.-W."/>
            <person name="Mayer K.F.X."/>
            <person name="Kaul S."/>
            <person name="Town C.D."/>
            <person name="Koo H.L."/>
            <person name="Tallon L.J."/>
            <person name="Jenkins J."/>
            <person name="Rooney T."/>
            <person name="Rizzo M."/>
            <person name="Walts A."/>
            <person name="Utterback T."/>
            <person name="Fujii C.Y."/>
            <person name="Shea T.P."/>
            <person name="Creasy T.H."/>
            <person name="Haas B."/>
            <person name="Maiti R."/>
            <person name="Wu D."/>
            <person name="Peterson J."/>
            <person name="Van Aken S."/>
            <person name="Pai G."/>
            <person name="Militscher J."/>
            <person name="Sellers P."/>
            <person name="Gill J.E."/>
            <person name="Feldblyum T.V."/>
            <person name="Preuss D."/>
            <person name="Lin X."/>
            <person name="Nierman W.C."/>
            <person name="Salzberg S.L."/>
            <person name="White O."/>
            <person name="Venter J.C."/>
            <person name="Fraser C.M."/>
            <person name="Kaneko T."/>
            <person name="Nakamura Y."/>
            <person name="Sato S."/>
            <person name="Kato T."/>
            <person name="Asamizu E."/>
            <person name="Sasamoto S."/>
            <person name="Kimura T."/>
            <person name="Idesawa K."/>
            <person name="Kawashima K."/>
            <person name="Kishida Y."/>
            <person name="Kiyokawa C."/>
            <person name="Kohara M."/>
            <person name="Matsumoto M."/>
            <person name="Matsuno A."/>
            <person name="Muraki A."/>
            <person name="Nakayama S."/>
            <person name="Nakazaki N."/>
            <person name="Shinpo S."/>
            <person name="Takeuchi C."/>
            <person name="Wada T."/>
            <person name="Watanabe A."/>
            <person name="Yamada M."/>
            <person name="Yasuda M."/>
            <person name="Tabata S."/>
        </authorList>
    </citation>
    <scope>NUCLEOTIDE SEQUENCE [LARGE SCALE GENOMIC DNA]</scope>
    <source>
        <strain>cv. Columbia</strain>
    </source>
</reference>
<reference key="2">
    <citation type="journal article" date="2017" name="Plant J.">
        <title>Araport11: a complete reannotation of the Arabidopsis thaliana reference genome.</title>
        <authorList>
            <person name="Cheng C.Y."/>
            <person name="Krishnakumar V."/>
            <person name="Chan A.P."/>
            <person name="Thibaud-Nissen F."/>
            <person name="Schobel S."/>
            <person name="Town C.D."/>
        </authorList>
    </citation>
    <scope>GENOME REANNOTATION</scope>
    <source>
        <strain>cv. Columbia</strain>
    </source>
</reference>
<reference key="3">
    <citation type="journal article" date="2002" name="Science">
        <title>Functional annotation of a full-length Arabidopsis cDNA collection.</title>
        <authorList>
            <person name="Seki M."/>
            <person name="Narusaka M."/>
            <person name="Kamiya A."/>
            <person name="Ishida J."/>
            <person name="Satou M."/>
            <person name="Sakurai T."/>
            <person name="Nakajima M."/>
            <person name="Enju A."/>
            <person name="Akiyama K."/>
            <person name="Oono Y."/>
            <person name="Muramatsu M."/>
            <person name="Hayashizaki Y."/>
            <person name="Kawai J."/>
            <person name="Carninci P."/>
            <person name="Itoh M."/>
            <person name="Ishii Y."/>
            <person name="Arakawa T."/>
            <person name="Shibata K."/>
            <person name="Shinagawa A."/>
            <person name="Shinozaki K."/>
        </authorList>
    </citation>
    <scope>NUCLEOTIDE SEQUENCE [LARGE SCALE MRNA]</scope>
    <source>
        <strain>cv. Columbia</strain>
    </source>
</reference>
<reference key="4">
    <citation type="journal article" date="2003" name="Science">
        <title>Empirical analysis of transcriptional activity in the Arabidopsis genome.</title>
        <authorList>
            <person name="Yamada K."/>
            <person name="Lim J."/>
            <person name="Dale J.M."/>
            <person name="Chen H."/>
            <person name="Shinn P."/>
            <person name="Palm C.J."/>
            <person name="Southwick A.M."/>
            <person name="Wu H.C."/>
            <person name="Kim C.J."/>
            <person name="Nguyen M."/>
            <person name="Pham P.K."/>
            <person name="Cheuk R.F."/>
            <person name="Karlin-Newmann G."/>
            <person name="Liu S.X."/>
            <person name="Lam B."/>
            <person name="Sakano H."/>
            <person name="Wu T."/>
            <person name="Yu G."/>
            <person name="Miranda M."/>
            <person name="Quach H.L."/>
            <person name="Tripp M."/>
            <person name="Chang C.H."/>
            <person name="Lee J.M."/>
            <person name="Toriumi M.J."/>
            <person name="Chan M.M."/>
            <person name="Tang C.C."/>
            <person name="Onodera C.S."/>
            <person name="Deng J.M."/>
            <person name="Akiyama K."/>
            <person name="Ansari Y."/>
            <person name="Arakawa T."/>
            <person name="Banh J."/>
            <person name="Banno F."/>
            <person name="Bowser L."/>
            <person name="Brooks S.Y."/>
            <person name="Carninci P."/>
            <person name="Chao Q."/>
            <person name="Choy N."/>
            <person name="Enju A."/>
            <person name="Goldsmith A.D."/>
            <person name="Gurjal M."/>
            <person name="Hansen N.F."/>
            <person name="Hayashizaki Y."/>
            <person name="Johnson-Hopson C."/>
            <person name="Hsuan V.W."/>
            <person name="Iida K."/>
            <person name="Karnes M."/>
            <person name="Khan S."/>
            <person name="Koesema E."/>
            <person name="Ishida J."/>
            <person name="Jiang P.X."/>
            <person name="Jones T."/>
            <person name="Kawai J."/>
            <person name="Kamiya A."/>
            <person name="Meyers C."/>
            <person name="Nakajima M."/>
            <person name="Narusaka M."/>
            <person name="Seki M."/>
            <person name="Sakurai T."/>
            <person name="Satou M."/>
            <person name="Tamse R."/>
            <person name="Vaysberg M."/>
            <person name="Wallender E.K."/>
            <person name="Wong C."/>
            <person name="Yamamura Y."/>
            <person name="Yuan S."/>
            <person name="Shinozaki K."/>
            <person name="Davis R.W."/>
            <person name="Theologis A."/>
            <person name="Ecker J.R."/>
        </authorList>
    </citation>
    <scope>NUCLEOTIDE SEQUENCE [LARGE SCALE MRNA]</scope>
    <source>
        <strain>cv. Columbia</strain>
    </source>
</reference>
<reference key="5">
    <citation type="submission" date="2002-03" db="EMBL/GenBank/DDBJ databases">
        <title>Full-length cDNA from Arabidopsis thaliana.</title>
        <authorList>
            <person name="Brover V.V."/>
            <person name="Troukhan M.E."/>
            <person name="Alexandrov N.A."/>
            <person name="Lu Y.-P."/>
            <person name="Flavell R.B."/>
            <person name="Feldmann K.A."/>
        </authorList>
    </citation>
    <scope>NUCLEOTIDE SEQUENCE [LARGE SCALE MRNA]</scope>
</reference>
<reference key="6">
    <citation type="journal article" date="2001" name="Plant Physiol.">
        <title>The organization of cytoplasmic ribosomal protein genes in the Arabidopsis genome.</title>
        <authorList>
            <person name="Barakat A."/>
            <person name="Szick-Miranda K."/>
            <person name="Chang I.-F."/>
            <person name="Guyot R."/>
            <person name="Blanc G."/>
            <person name="Cooke R."/>
            <person name="Delseny M."/>
            <person name="Bailey-Serres J."/>
        </authorList>
    </citation>
    <scope>GENE FAMILY ORGANIZATION</scope>
    <scope>NOMENCLATURE</scope>
</reference>
<reference key="7">
    <citation type="journal article" date="2023" name="Plant Cell">
        <title>An updated nomenclature for plant ribosomal protein genes.</title>
        <authorList>
            <person name="Scarpin M.R."/>
            <person name="Busche M."/>
            <person name="Martinez R.E."/>
            <person name="Harper L.C."/>
            <person name="Reiser L."/>
            <person name="Szakonyi D."/>
            <person name="Merchante C."/>
            <person name="Lan T."/>
            <person name="Xiong W."/>
            <person name="Mo B."/>
            <person name="Tang G."/>
            <person name="Chen X."/>
            <person name="Bailey-Serres J."/>
            <person name="Browning K.S."/>
            <person name="Brunkard J.O."/>
        </authorList>
    </citation>
    <scope>NOMENCLATURE</scope>
</reference>
<dbReference type="EMBL" id="AC009755">
    <property type="protein sequence ID" value="AAF02118.1"/>
    <property type="status" value="ALT_SEQ"/>
    <property type="molecule type" value="Genomic_DNA"/>
</dbReference>
<dbReference type="EMBL" id="AC011664">
    <property type="status" value="NOT_ANNOTATED_CDS"/>
    <property type="molecule type" value="Genomic_DNA"/>
</dbReference>
<dbReference type="EMBL" id="CP002686">
    <property type="protein sequence ID" value="AEE73776.1"/>
    <property type="molecule type" value="Genomic_DNA"/>
</dbReference>
<dbReference type="EMBL" id="AK118748">
    <property type="protein sequence ID" value="BAC43341.1"/>
    <property type="molecule type" value="mRNA"/>
</dbReference>
<dbReference type="EMBL" id="BT004930">
    <property type="protein sequence ID" value="AAO50463.1"/>
    <property type="molecule type" value="mRNA"/>
</dbReference>
<dbReference type="EMBL" id="AY088763">
    <property type="protein sequence ID" value="AAM67078.1"/>
    <property type="molecule type" value="mRNA"/>
</dbReference>
<dbReference type="RefSeq" id="NP_566167.1">
    <property type="nucleotide sequence ID" value="NM_111086.3"/>
</dbReference>
<dbReference type="SMR" id="Q8L8W6"/>
<dbReference type="BioGRID" id="5684">
    <property type="interactions" value="2"/>
</dbReference>
<dbReference type="FunCoup" id="Q8L8W6">
    <property type="interactions" value="2156"/>
</dbReference>
<dbReference type="IntAct" id="Q8L8W6">
    <property type="interactions" value="2"/>
</dbReference>
<dbReference type="STRING" id="3702.Q8L8W6"/>
<dbReference type="PaxDb" id="3702-AT3G02190.1"/>
<dbReference type="ProteomicsDB" id="226844"/>
<dbReference type="EnsemblPlants" id="AT3G02190.1">
    <property type="protein sequence ID" value="AT3G02190.1"/>
    <property type="gene ID" value="AT3G02190"/>
</dbReference>
<dbReference type="GeneID" id="820350"/>
<dbReference type="Gramene" id="AT3G02190.1">
    <property type="protein sequence ID" value="AT3G02190.1"/>
    <property type="gene ID" value="AT3G02190"/>
</dbReference>
<dbReference type="KEGG" id="ath:AT3G02190"/>
<dbReference type="Araport" id="AT3G02190"/>
<dbReference type="TAIR" id="AT3G02190"/>
<dbReference type="eggNOG" id="KOG0002">
    <property type="taxonomic scope" value="Eukaryota"/>
</dbReference>
<dbReference type="HOGENOM" id="CLU_181948_3_0_1"/>
<dbReference type="InParanoid" id="Q8L8W6"/>
<dbReference type="OMA" id="QNWRRMK"/>
<dbReference type="PhylomeDB" id="Q8L8W6"/>
<dbReference type="PRO" id="PR:Q8L8W6"/>
<dbReference type="Proteomes" id="UP000006548">
    <property type="component" value="Chromosome 3"/>
</dbReference>
<dbReference type="ExpressionAtlas" id="Q8L8W6">
    <property type="expression patterns" value="baseline and differential"/>
</dbReference>
<dbReference type="GO" id="GO:0005829">
    <property type="term" value="C:cytosol"/>
    <property type="evidence" value="ECO:0007005"/>
    <property type="project" value="TAIR"/>
</dbReference>
<dbReference type="GO" id="GO:0022625">
    <property type="term" value="C:cytosolic large ribosomal subunit"/>
    <property type="evidence" value="ECO:0007005"/>
    <property type="project" value="TAIR"/>
</dbReference>
<dbReference type="GO" id="GO:0003735">
    <property type="term" value="F:structural constituent of ribosome"/>
    <property type="evidence" value="ECO:0000314"/>
    <property type="project" value="CAFA"/>
</dbReference>
<dbReference type="GO" id="GO:0006412">
    <property type="term" value="P:translation"/>
    <property type="evidence" value="ECO:0007669"/>
    <property type="project" value="InterPro"/>
</dbReference>
<dbReference type="FunFam" id="1.10.1620.10:FF:000001">
    <property type="entry name" value="60S ribosomal protein-like L39"/>
    <property type="match status" value="1"/>
</dbReference>
<dbReference type="Gene3D" id="1.10.1620.10">
    <property type="entry name" value="Ribosomal protein L39e"/>
    <property type="match status" value="1"/>
</dbReference>
<dbReference type="HAMAP" id="MF_00629">
    <property type="entry name" value="Ribosomal_eL39"/>
    <property type="match status" value="1"/>
</dbReference>
<dbReference type="InterPro" id="IPR000077">
    <property type="entry name" value="Ribosomal_eL39"/>
</dbReference>
<dbReference type="InterPro" id="IPR020083">
    <property type="entry name" value="Ribosomal_eL39_CS"/>
</dbReference>
<dbReference type="InterPro" id="IPR023626">
    <property type="entry name" value="Ribosomal_eL39_dom_sf"/>
</dbReference>
<dbReference type="PANTHER" id="PTHR19970:SF0">
    <property type="entry name" value="LARGE RIBOSOMAL SUBUNIT PROTEIN EL39"/>
    <property type="match status" value="1"/>
</dbReference>
<dbReference type="PANTHER" id="PTHR19970">
    <property type="entry name" value="RIBOSOMAL PROTEIN L39E"/>
    <property type="match status" value="1"/>
</dbReference>
<dbReference type="Pfam" id="PF00832">
    <property type="entry name" value="Ribosomal_L39"/>
    <property type="match status" value="1"/>
</dbReference>
<dbReference type="SUPFAM" id="SSF48662">
    <property type="entry name" value="Ribosomal protein L39e"/>
    <property type="match status" value="1"/>
</dbReference>
<dbReference type="PROSITE" id="PS00051">
    <property type="entry name" value="RIBOSOMAL_L39E"/>
    <property type="match status" value="1"/>
</dbReference>
<proteinExistence type="inferred from homology"/>
<gene>
    <name type="primary">RPL39B</name>
    <name type="ordered locus">At3g02190</name>
    <name type="ORF">F14P3.16</name>
    <name type="ORF">F1C9.36</name>
</gene>
<comment type="similarity">
    <text evidence="3">Belongs to the eukaryotic ribosomal protein eL39 family.</text>
</comment>
<comment type="sequence caution" evidence="3">
    <conflict type="erroneous gene model prediction">
        <sequence resource="EMBL-CDS" id="AAF02118"/>
    </conflict>
</comment>
<keyword id="KW-1185">Reference proteome</keyword>
<keyword id="KW-0687">Ribonucleoprotein</keyword>
<keyword id="KW-0689">Ribosomal protein</keyword>
<sequence>MPSHKSFMIKKKLGKKMRQNRPIPNWIRLRTDNKIRYNAKRRHWRRTKLGF</sequence>
<accession>Q8L8W6</accession>
<accession>Q9SRT6</accession>